<feature type="chain" id="PRO_0000074203" description="ARF GTPase-activating protein GIT2">
    <location>
        <begin position="1"/>
        <end position="759"/>
    </location>
</feature>
<feature type="domain" description="Arf-GAP" evidence="4">
    <location>
        <begin position="1"/>
        <end position="124"/>
    </location>
</feature>
<feature type="repeat" description="ANK 1">
    <location>
        <begin position="132"/>
        <end position="161"/>
    </location>
</feature>
<feature type="repeat" description="ANK 2">
    <location>
        <begin position="166"/>
        <end position="195"/>
    </location>
</feature>
<feature type="repeat" description="ANK 3">
    <location>
        <begin position="199"/>
        <end position="228"/>
    </location>
</feature>
<feature type="zinc finger region" description="C4-type" evidence="4">
    <location>
        <begin position="11"/>
        <end position="34"/>
    </location>
</feature>
<feature type="region of interest" description="Disordered" evidence="5">
    <location>
        <begin position="379"/>
        <end position="422"/>
    </location>
</feature>
<feature type="region of interest" description="Disordered" evidence="5">
    <location>
        <begin position="480"/>
        <end position="538"/>
    </location>
</feature>
<feature type="region of interest" description="Disordered" evidence="5">
    <location>
        <begin position="554"/>
        <end position="643"/>
    </location>
</feature>
<feature type="coiled-coil region" evidence="3">
    <location>
        <begin position="437"/>
        <end position="478"/>
    </location>
</feature>
<feature type="compositionally biased region" description="Acidic residues" evidence="5">
    <location>
        <begin position="385"/>
        <end position="403"/>
    </location>
</feature>
<feature type="compositionally biased region" description="Polar residues" evidence="5">
    <location>
        <begin position="480"/>
        <end position="499"/>
    </location>
</feature>
<feature type="compositionally biased region" description="Low complexity" evidence="5">
    <location>
        <begin position="555"/>
        <end position="569"/>
    </location>
</feature>
<feature type="compositionally biased region" description="Basic and acidic residues" evidence="5">
    <location>
        <begin position="570"/>
        <end position="583"/>
    </location>
</feature>
<feature type="compositionally biased region" description="Polar residues" evidence="5">
    <location>
        <begin position="584"/>
        <end position="597"/>
    </location>
</feature>
<feature type="modified residue" description="Phosphoserine" evidence="17 18">
    <location>
        <position position="394"/>
    </location>
</feature>
<feature type="modified residue" description="Phosphoserine" evidence="17 18 20">
    <location>
        <position position="397"/>
    </location>
</feature>
<feature type="modified residue" description="Phosphothreonine" evidence="2">
    <location>
        <position position="401"/>
    </location>
</feature>
<feature type="modified residue" description="Phosphoserine" evidence="15 21">
    <location>
        <position position="415"/>
    </location>
</feature>
<feature type="modified residue" description="Phosphoserine" evidence="15">
    <location>
        <position position="418"/>
    </location>
</feature>
<feature type="modified residue" description="Phosphoserine" evidence="15 19">
    <location>
        <position position="421"/>
    </location>
</feature>
<feature type="modified residue" description="Phosphotyrosine" evidence="14">
    <location>
        <position position="484"/>
    </location>
</feature>
<feature type="modified residue" description="Phosphoserine" evidence="18">
    <location>
        <position position="559"/>
    </location>
</feature>
<feature type="modified residue" description="Phosphoserine" evidence="2">
    <location>
        <position position="562"/>
    </location>
</feature>
<feature type="modified residue" description="Phosphoserine" evidence="2">
    <location>
        <position position="570"/>
    </location>
</feature>
<feature type="modified residue" description="Phosphothreonine" evidence="2">
    <location>
        <position position="587"/>
    </location>
</feature>
<feature type="modified residue" description="Phosphoserine" evidence="16 18">
    <location>
        <position position="614"/>
    </location>
</feature>
<feature type="splice variant" id="VSP_026456" description="In isoform 10." evidence="11">
    <original>S</original>
    <variation>RRL</variation>
    <location>
        <position position="255"/>
    </location>
</feature>
<feature type="splice variant" id="VSP_000305" description="In isoform 9." evidence="9">
    <location>
        <begin position="334"/>
        <end position="414"/>
    </location>
</feature>
<feature type="splice variant" id="VSP_008654" description="In isoform 10." evidence="11">
    <location>
        <begin position="414"/>
        <end position="463"/>
    </location>
</feature>
<feature type="splice variant" id="VSP_000306" description="In isoform 4 and isoform 8." evidence="9">
    <location>
        <begin position="415"/>
        <end position="449"/>
    </location>
</feature>
<feature type="splice variant" id="VSP_000307" description="In isoform 3, isoform 4, isoform 6 and isoform 11." evidence="9 10">
    <location>
        <begin position="450"/>
        <end position="464"/>
    </location>
</feature>
<feature type="splice variant" id="VSP_000308" description="In isoform 6, isoform 7 and isoform 11." evidence="9 10">
    <location>
        <begin position="465"/>
        <end position="547"/>
    </location>
</feature>
<feature type="splice variant" id="VSP_000303" description="In isoform 2." evidence="9 10 12">
    <original>QTLQSE</original>
    <variation>LGKDAN</variation>
    <location>
        <begin position="466"/>
        <end position="471"/>
    </location>
</feature>
<feature type="splice variant" id="VSP_000304" description="In isoform 2." evidence="9 10 12">
    <location>
        <begin position="472"/>
        <end position="759"/>
    </location>
</feature>
<feature type="splice variant" id="VSP_000309" description="In isoform 5, isoform 7, isoform 8, isoform 9, isoform 10 and isoform 11." evidence="9 10 11">
    <location>
        <begin position="548"/>
        <end position="577"/>
    </location>
</feature>
<feature type="sequence variant" id="VAR_048324" description="In dbSNP:rs9804905.">
    <original>N</original>
    <variation>S</variation>
    <location>
        <position position="338"/>
    </location>
</feature>
<feature type="sequence variant" id="VAR_024368" description="In dbSNP:rs925368.">
    <original>N</original>
    <variation>S</variation>
    <location>
        <position position="387"/>
    </location>
</feature>
<feature type="sequence variant" id="VAR_048325" description="In dbSNP:rs11068997.">
    <original>A</original>
    <variation>V</variation>
    <location>
        <position position="552"/>
    </location>
</feature>
<feature type="sequence conflict" description="In Ref. 4; AAP35976 and 5; AAH01379." evidence="13" ref="4 5">
    <original>V</original>
    <variation>M</variation>
    <location>
        <position position="285"/>
    </location>
</feature>
<reference key="1">
    <citation type="journal article" date="2000" name="J. Biol. Chem.">
        <title>The GIT family of ADP-ribosylation factor GTPase-activating proteins. Functional diversity of GIT2 through alternative splicing.</title>
        <authorList>
            <person name="Premont R.T."/>
            <person name="Claing A."/>
            <person name="Vitale N."/>
            <person name="Perry S.J."/>
            <person name="Lefkowitz R.J."/>
        </authorList>
    </citation>
    <scope>NUCLEOTIDE SEQUENCE [MRNA] (ISOFORMS 1; 2; 3; 4; 5; 6; 7; 8 AND 9)</scope>
    <scope>FUNCTION</scope>
    <scope>INTERACTION WITH ARHGEF7 AND PAK3</scope>
</reference>
<reference key="2">
    <citation type="journal article" date="1995" name="DNA Res.">
        <title>Prediction of the coding sequences of unidentified human genes. IV. The coding sequences of 40 new genes (KIAA0121-KIAA0160) deduced by analysis of cDNA clones from human cell line KG-1.</title>
        <authorList>
            <person name="Nagase T."/>
            <person name="Seki N."/>
            <person name="Tanaka A."/>
            <person name="Ishikawa K."/>
            <person name="Nomura N."/>
        </authorList>
    </citation>
    <scope>NUCLEOTIDE SEQUENCE [LARGE SCALE MRNA] (ISOFORM 10)</scope>
    <source>
        <tissue>Bone marrow</tissue>
    </source>
</reference>
<reference key="3">
    <citation type="journal article" date="2002" name="DNA Res.">
        <title>Construction of expression-ready cDNA clones for KIAA genes: manual curation of 330 KIAA cDNA clones.</title>
        <authorList>
            <person name="Nakajima D."/>
            <person name="Okazaki N."/>
            <person name="Yamakawa H."/>
            <person name="Kikuno R."/>
            <person name="Ohara O."/>
            <person name="Nagase T."/>
        </authorList>
    </citation>
    <scope>SEQUENCE REVISION</scope>
</reference>
<reference key="4">
    <citation type="submission" date="2003-05" db="EMBL/GenBank/DDBJ databases">
        <title>Cloning of human full-length CDSs in BD Creator(TM) system donor vector.</title>
        <authorList>
            <person name="Kalnine N."/>
            <person name="Chen X."/>
            <person name="Rolfs A."/>
            <person name="Halleck A."/>
            <person name="Hines L."/>
            <person name="Eisenstein S."/>
            <person name="Koundinya M."/>
            <person name="Raphael J."/>
            <person name="Moreira D."/>
            <person name="Kelley T."/>
            <person name="LaBaer J."/>
            <person name="Lin Y."/>
            <person name="Phelan M."/>
            <person name="Farmer A."/>
        </authorList>
    </citation>
    <scope>NUCLEOTIDE SEQUENCE [LARGE SCALE MRNA] (ISOFORM 2)</scope>
</reference>
<reference key="5">
    <citation type="journal article" date="2004" name="Genome Res.">
        <title>The status, quality, and expansion of the NIH full-length cDNA project: the Mammalian Gene Collection (MGC).</title>
        <authorList>
            <consortium name="The MGC Project Team"/>
        </authorList>
    </citation>
    <scope>NUCLEOTIDE SEQUENCE [LARGE SCALE MRNA] (ISOFORM 2)</scope>
    <scope>NUCLEOTIDE SEQUENCE [LARGE SCALE MRNA] OF 29-759 (ISOFORM 11)</scope>
    <source>
        <tissue>B-cell</tissue>
        <tissue>Skin</tissue>
    </source>
</reference>
<reference key="6">
    <citation type="journal article" date="2001" name="Mol. Biol. Cell">
        <title>An ADP-ribosylation factor GTPase-activating protein Git2-short/KIAA0148 is involved in subcellular localization of paxillin and actin cytoskeletal organization.</title>
        <authorList>
            <person name="Mazaki Y."/>
            <person name="Hashimoto S."/>
            <person name="Okawa K."/>
            <person name="Tsubouchi A."/>
            <person name="Nakamura K."/>
            <person name="Yagi R."/>
            <person name="Yano H."/>
            <person name="Kondo A."/>
            <person name="Iwamatsu A."/>
            <person name="Mizoguchi A."/>
            <person name="Sabe H."/>
        </authorList>
    </citation>
    <scope>INTERACTION WITH PAXILLIN</scope>
</reference>
<reference key="7">
    <citation type="journal article" date="2004" name="Anal. Chem.">
        <title>Robust phosphoproteomic profiling of tyrosine phosphorylation sites from human T cells using immobilized metal affinity chromatography and tandem mass spectrometry.</title>
        <authorList>
            <person name="Brill L.M."/>
            <person name="Salomon A.R."/>
            <person name="Ficarro S.B."/>
            <person name="Mukherji M."/>
            <person name="Stettler-Gill M."/>
            <person name="Peters E.C."/>
        </authorList>
    </citation>
    <scope>IDENTIFICATION BY MASS SPECTROMETRY [LARGE SCALE ANALYSIS]</scope>
    <source>
        <tissue>Leukemic T-cell</tissue>
    </source>
</reference>
<reference key="8">
    <citation type="journal article" date="2005" name="Nat. Biotechnol.">
        <title>Immunoaffinity profiling of tyrosine phosphorylation in cancer cells.</title>
        <authorList>
            <person name="Rush J."/>
            <person name="Moritz A."/>
            <person name="Lee K.A."/>
            <person name="Guo A."/>
            <person name="Goss V.L."/>
            <person name="Spek E.J."/>
            <person name="Zhang H."/>
            <person name="Zha X.-M."/>
            <person name="Polakiewicz R.D."/>
            <person name="Comb M.J."/>
        </authorList>
    </citation>
    <scope>PHOSPHORYLATION [LARGE SCALE ANALYSIS] AT TYR-484</scope>
    <scope>IDENTIFICATION BY MASS SPECTROMETRY [LARGE SCALE ANALYSIS]</scope>
</reference>
<reference key="9">
    <citation type="journal article" date="2006" name="Cell">
        <title>Global, in vivo, and site-specific phosphorylation dynamics in signaling networks.</title>
        <authorList>
            <person name="Olsen J.V."/>
            <person name="Blagoev B."/>
            <person name="Gnad F."/>
            <person name="Macek B."/>
            <person name="Kumar C."/>
            <person name="Mortensen P."/>
            <person name="Mann M."/>
        </authorList>
    </citation>
    <scope>PHOSPHORYLATION [LARGE SCALE ANALYSIS] AT SER-415; SER-418 AND SER-421</scope>
    <scope>IDENTIFICATION BY MASS SPECTROMETRY [LARGE SCALE ANALYSIS]</scope>
    <source>
        <tissue>Cervix carcinoma</tissue>
    </source>
</reference>
<reference key="10">
    <citation type="journal article" date="2008" name="J. Proteome Res.">
        <title>Combining protein-based IMAC, peptide-based IMAC, and MudPIT for efficient phosphoproteomic analysis.</title>
        <authorList>
            <person name="Cantin G.T."/>
            <person name="Yi W."/>
            <person name="Lu B."/>
            <person name="Park S.K."/>
            <person name="Xu T."/>
            <person name="Lee J.-D."/>
            <person name="Yates J.R. III"/>
        </authorList>
    </citation>
    <scope>PHOSPHORYLATION [LARGE SCALE ANALYSIS] AT SER-614</scope>
    <scope>IDENTIFICATION BY MASS SPECTROMETRY [LARGE SCALE ANALYSIS]</scope>
    <source>
        <tissue>Cervix carcinoma</tissue>
    </source>
</reference>
<reference key="11">
    <citation type="journal article" date="2008" name="Proc. Natl. Acad. Sci. U.S.A.">
        <title>A quantitative atlas of mitotic phosphorylation.</title>
        <authorList>
            <person name="Dephoure N."/>
            <person name="Zhou C."/>
            <person name="Villen J."/>
            <person name="Beausoleil S.A."/>
            <person name="Bakalarski C.E."/>
            <person name="Elledge S.J."/>
            <person name="Gygi S.P."/>
        </authorList>
    </citation>
    <scope>PHOSPHORYLATION [LARGE SCALE ANALYSIS] AT SER-394 AND SER-397</scope>
    <scope>IDENTIFICATION BY MASS SPECTROMETRY [LARGE SCALE ANALYSIS]</scope>
    <source>
        <tissue>Cervix carcinoma</tissue>
    </source>
</reference>
<reference key="12">
    <citation type="journal article" date="2009" name="Sci. Signal.">
        <title>Quantitative phosphoproteomic analysis of T cell receptor signaling reveals system-wide modulation of protein-protein interactions.</title>
        <authorList>
            <person name="Mayya V."/>
            <person name="Lundgren D.H."/>
            <person name="Hwang S.-I."/>
            <person name="Rezaul K."/>
            <person name="Wu L."/>
            <person name="Eng J.K."/>
            <person name="Rodionov V."/>
            <person name="Han D.K."/>
        </authorList>
    </citation>
    <scope>PHOSPHORYLATION [LARGE SCALE ANALYSIS] AT SER-394; SER-397; SER-559 AND SER-614</scope>
    <scope>IDENTIFICATION BY MASS SPECTROMETRY [LARGE SCALE ANALYSIS]</scope>
    <source>
        <tissue>Leukemic T-cell</tissue>
    </source>
</reference>
<reference key="13">
    <citation type="journal article" date="2010" name="Sci. Signal.">
        <title>Quantitative phosphoproteomics reveals widespread full phosphorylation site occupancy during mitosis.</title>
        <authorList>
            <person name="Olsen J.V."/>
            <person name="Vermeulen M."/>
            <person name="Santamaria A."/>
            <person name="Kumar C."/>
            <person name="Miller M.L."/>
            <person name="Jensen L.J."/>
            <person name="Gnad F."/>
            <person name="Cox J."/>
            <person name="Jensen T.S."/>
            <person name="Nigg E.A."/>
            <person name="Brunak S."/>
            <person name="Mann M."/>
        </authorList>
    </citation>
    <scope>PHOSPHORYLATION [LARGE SCALE ANALYSIS] AT SER-421</scope>
    <scope>IDENTIFICATION BY MASS SPECTROMETRY [LARGE SCALE ANALYSIS]</scope>
    <source>
        <tissue>Cervix carcinoma</tissue>
    </source>
</reference>
<reference key="14">
    <citation type="journal article" date="2011" name="Sci. Signal.">
        <title>System-wide temporal characterization of the proteome and phosphoproteome of human embryonic stem cell differentiation.</title>
        <authorList>
            <person name="Rigbolt K.T."/>
            <person name="Prokhorova T.A."/>
            <person name="Akimov V."/>
            <person name="Henningsen J."/>
            <person name="Johansen P.T."/>
            <person name="Kratchmarova I."/>
            <person name="Kassem M."/>
            <person name="Mann M."/>
            <person name="Olsen J.V."/>
            <person name="Blagoev B."/>
        </authorList>
    </citation>
    <scope>IDENTIFICATION BY MASS SPECTROMETRY [LARGE SCALE ANALYSIS]</scope>
</reference>
<reference key="15">
    <citation type="journal article" date="2012" name="PLoS ONE">
        <title>Bin2 is a membrane sculpting N-BAR protein that influences leucocyte podosomes, motility and phagocytosis.</title>
        <authorList>
            <person name="Sanchez-Barrena M.J."/>
            <person name="Vallis Y."/>
            <person name="Clatworthy M.R."/>
            <person name="Doherty G.J."/>
            <person name="Veprintsev D.B."/>
            <person name="Evans P.R."/>
            <person name="McMahon H.T."/>
        </authorList>
    </citation>
    <scope>IDENTIFICATION IN A COMPLEX WITH BIN2 AND ARHGEF6</scope>
</reference>
<reference key="16">
    <citation type="journal article" date="2013" name="J. Proteome Res.">
        <title>Toward a comprehensive characterization of a human cancer cell phosphoproteome.</title>
        <authorList>
            <person name="Zhou H."/>
            <person name="Di Palma S."/>
            <person name="Preisinger C."/>
            <person name="Peng M."/>
            <person name="Polat A.N."/>
            <person name="Heck A.J."/>
            <person name="Mohammed S."/>
        </authorList>
    </citation>
    <scope>PHOSPHORYLATION [LARGE SCALE ANALYSIS] AT SER-397</scope>
    <scope>IDENTIFICATION BY MASS SPECTROMETRY [LARGE SCALE ANALYSIS]</scope>
    <source>
        <tissue>Cervix carcinoma</tissue>
        <tissue>Erythroleukemia</tissue>
    </source>
</reference>
<reference key="17">
    <citation type="journal article" date="2014" name="J. Proteomics">
        <title>An enzyme assisted RP-RPLC approach for in-depth analysis of human liver phosphoproteome.</title>
        <authorList>
            <person name="Bian Y."/>
            <person name="Song C."/>
            <person name="Cheng K."/>
            <person name="Dong M."/>
            <person name="Wang F."/>
            <person name="Huang J."/>
            <person name="Sun D."/>
            <person name="Wang L."/>
            <person name="Ye M."/>
            <person name="Zou H."/>
        </authorList>
    </citation>
    <scope>PHOSPHORYLATION [LARGE SCALE ANALYSIS] AT SER-415</scope>
    <scope>IDENTIFICATION BY MASS SPECTROMETRY [LARGE SCALE ANALYSIS]</scope>
    <source>
        <tissue>Liver</tissue>
    </source>
</reference>
<accession>Q14161</accession>
<accession>Q86U59</accession>
<accession>Q96CI2</accession>
<accession>Q9BV91</accession>
<accession>Q9Y5V2</accession>
<sequence length="759" mass="84543">MSKRLRSSEVCADCSGPDPSWASVNRGTFLCDECCSVHRSLGRHISQVRHLKHTPWPPTLLQMVETLYNNGANSIWEHSLLDPASIMSGRRKANPQDKVHPNKAEFIRAKYQMLAFVHRLPCRDDDSVTAKDLSKQLHSSVRTGNLETCLRLLSLGAQANFFHPEKGNTPLHVASKAGQILQAELLAVYGADPGTQDSSGKTPVDYARQGGHHELAERLVEIQYELTDRLAFYLCGRKPDHKNGQHFIIPQMADSSLDLSELAKAAKKKLQSLSNHLFEELAMDVYDEVDRRETDAVWLATQNHSALVTETTVVPFLPVNPEYSSTRNQGRQKLARFNAHEFATLVIDILSDAKRRQQGSSLSGSKDNVELILKTINNQHSVESQDNDQPDYDSVASDEDTDLETTASKTNRQKSLDSDLSDGPVTVQEFMEVKNALVASEAKIQQLMKVNNNLSDELRIMQKKLQTLQSENSNLRKQATTNVYQVQTGSEYTDTSNHSSLKRRPSARGSRPMSMYETGSGQKPYLPMGEASRPEESRMRLQPFPAHIGRSALVTSSSSLPSFPSTLSWSRDESARRASRLEKQNSTPESDYDNTPNDMEPDGMGSSRKGRQRSMVWPGDGLVPDTAEPHVAPSPTLPSTEDVIRKTEQITKNIQELLRAAQENKHDSYIPCSERIHVAVTEMAALFPKKPKSDMVRTSLRLLTSSAYRLQSECKKTLPGDPGSPTDVQLVTQQVIQCAYDIAKAAKQLVTITTKENNN</sequence>
<organism>
    <name type="scientific">Homo sapiens</name>
    <name type="common">Human</name>
    <dbReference type="NCBI Taxonomy" id="9606"/>
    <lineage>
        <taxon>Eukaryota</taxon>
        <taxon>Metazoa</taxon>
        <taxon>Chordata</taxon>
        <taxon>Craniata</taxon>
        <taxon>Vertebrata</taxon>
        <taxon>Euteleostomi</taxon>
        <taxon>Mammalia</taxon>
        <taxon>Eutheria</taxon>
        <taxon>Euarchontoglires</taxon>
        <taxon>Primates</taxon>
        <taxon>Haplorrhini</taxon>
        <taxon>Catarrhini</taxon>
        <taxon>Hominidae</taxon>
        <taxon>Homo</taxon>
    </lineage>
</organism>
<name>GIT2_HUMAN</name>
<proteinExistence type="evidence at protein level"/>
<comment type="function">
    <text evidence="6">GTPase-activating protein for ADP ribosylation factor family members, including ARF1.</text>
</comment>
<comment type="subunit">
    <text evidence="1 2 6 7 8">May form heterooligomers with GIT1 (By similarity). Directly interacts with protein Piccolo/PCLO (By similarity). Interacts with PPFIA1 and PPFIA2 (By similarity). Interacts with ARHGEF7 (PubMed:10896954). Identified in a complex with ARHGEF6 and BIN2 (PubMed:23285027). Interacts with PAK3 (PubMed:10896954). Interacts with PXN/paxillin (PubMed:11251077). Interacts with TGFB1I1 (By similarity). Forms a complex with EFNB1 and GRB4/NCK2 (By similarity).</text>
</comment>
<comment type="interaction">
    <interactant intactId="EBI-1046878">
        <id>Q14161</id>
    </interactant>
    <interactant intactId="EBI-717515">
        <id>Q14155</id>
        <label>ARHGEF7</label>
    </interactant>
    <organismsDiffer>false</organismsDiffer>
    <experiments>5</experiments>
</comment>
<comment type="interaction">
    <interactant intactId="EBI-1046878">
        <id>Q14161</id>
    </interactant>
    <interactant intactId="EBI-466061">
        <id>Q9Y2X7</id>
        <label>GIT1</label>
    </interactant>
    <organismsDiffer>false</organismsDiffer>
    <experiments>2</experiments>
</comment>
<comment type="interaction">
    <interactant intactId="EBI-1046878">
        <id>Q14161</id>
    </interactant>
    <interactant intactId="EBI-81279">
        <id>Q9Y6K9</id>
        <label>IKBKG</label>
    </interactant>
    <organismsDiffer>false</organismsDiffer>
    <experiments>6</experiments>
</comment>
<comment type="interaction">
    <interactant intactId="EBI-1046878">
        <id>Q14161</id>
    </interactant>
    <interactant intactId="EBI-1307">
        <id>Q13153</id>
        <label>PAK1</label>
    </interactant>
    <organismsDiffer>false</organismsDiffer>
    <experiments>4</experiments>
</comment>
<comment type="interaction">
    <interactant intactId="EBI-1046878">
        <id>Q14161</id>
    </interactant>
    <interactant intactId="EBI-702209">
        <id>P49023</id>
        <label>PXN</label>
    </interactant>
    <organismsDiffer>false</organismsDiffer>
    <experiments>4</experiments>
</comment>
<comment type="interaction">
    <interactant intactId="EBI-1046878">
        <id>Q14161</id>
    </interactant>
    <interactant intactId="EBI-357849">
        <id>Q15025</id>
        <label>TNIP1</label>
    </interactant>
    <organismsDiffer>false</organismsDiffer>
    <experiments>3</experiments>
</comment>
<comment type="interaction">
    <interactant intactId="EBI-1046878">
        <id>Q14161</id>
    </interactant>
    <interactant intactId="EBI-359224">
        <id>Q13077</id>
        <label>TRAF1</label>
    </interactant>
    <organismsDiffer>false</organismsDiffer>
    <experiments>2</experiments>
</comment>
<comment type="interaction">
    <interactant intactId="EBI-1046878">
        <id>Q14161</id>
    </interactant>
    <interactant intactId="EBI-1044160">
        <id>Q15631</id>
        <label>TSN</label>
    </interactant>
    <organismsDiffer>false</organismsDiffer>
    <experiments>2</experiments>
</comment>
<comment type="interaction">
    <interactant intactId="EBI-1046878">
        <id>Q14161</id>
    </interactant>
    <interactant intactId="EBI-642580">
        <id>Q9ES28</id>
        <label>Arhgef7</label>
    </interactant>
    <organismsDiffer>true</organismsDiffer>
    <experiments>2</experiments>
</comment>
<comment type="interaction">
    <interactant intactId="EBI-12028686">
        <id>Q14161-11</id>
    </interactant>
    <interactant intactId="EBI-1642523">
        <id>Q15052</id>
        <label>ARHGEF6</label>
    </interactant>
    <organismsDiffer>false</organismsDiffer>
    <experiments>9</experiments>
</comment>
<comment type="interaction">
    <interactant intactId="EBI-12028686">
        <id>Q14161-11</id>
    </interactant>
    <interactant intactId="EBI-711823">
        <id>Q7L5D6</id>
        <label>GET4</label>
    </interactant>
    <organismsDiffer>false</organismsDiffer>
    <experiments>3</experiments>
</comment>
<comment type="alternative products">
    <event type="alternative splicing"/>
    <isoform>
        <id>Q14161-1</id>
        <name>1</name>
        <sequence type="displayed"/>
    </isoform>
    <isoform>
        <id>Q14161-2</id>
        <name>2</name>
        <name>GIT2-short</name>
        <sequence type="described" ref="VSP_000303 VSP_000304"/>
    </isoform>
    <isoform>
        <id>Q14161-3</id>
        <name>3</name>
        <name>C-</name>
        <sequence type="described" ref="VSP_000307"/>
    </isoform>
    <isoform>
        <id>Q14161-4</id>
        <name>4</name>
        <name>BC-</name>
        <sequence type="described" ref="VSP_000306 VSP_000307"/>
    </isoform>
    <isoform>
        <id>Q14161-5</id>
        <name>5</name>
        <name>E-</name>
        <sequence type="described" ref="VSP_000309"/>
    </isoform>
    <isoform>
        <id>Q14161-6</id>
        <name>6</name>
        <name>CD-</name>
        <sequence type="described" ref="VSP_000307 VSP_000308"/>
    </isoform>
    <isoform>
        <id>Q14161-7</id>
        <name>7</name>
        <name>DE-</name>
        <sequence type="described" ref="VSP_000308 VSP_000309"/>
    </isoform>
    <isoform>
        <id>Q14161-8</id>
        <name>8</name>
        <name>BE-</name>
        <sequence type="described" ref="VSP_000306 VSP_000309"/>
    </isoform>
    <isoform>
        <id>Q14161-9</id>
        <name>9</name>
        <name>AE-</name>
        <sequence type="described" ref="VSP_000305 VSP_000309"/>
    </isoform>
    <isoform>
        <id>Q14161-10</id>
        <name>10</name>
        <sequence type="described" ref="VSP_026456 VSP_008654 VSP_000309"/>
    </isoform>
    <isoform>
        <id>Q14161-11</id>
        <name>11</name>
        <sequence type="described" ref="VSP_000307 VSP_000308 VSP_000309"/>
    </isoform>
    <text>Additional isoforms seem to exist.</text>
</comment>
<comment type="sequence caution" evidence="13">
    <conflict type="erroneous initiation">
        <sequence resource="EMBL-CDS" id="BAA09769"/>
    </conflict>
</comment>
<dbReference type="EMBL" id="AF124491">
    <property type="protein sequence ID" value="AAD28047.1"/>
    <property type="molecule type" value="mRNA"/>
</dbReference>
<dbReference type="EMBL" id="D63482">
    <property type="protein sequence ID" value="BAA09769.2"/>
    <property type="status" value="ALT_INIT"/>
    <property type="molecule type" value="mRNA"/>
</dbReference>
<dbReference type="EMBL" id="BT007312">
    <property type="protein sequence ID" value="AAP35976.1"/>
    <property type="molecule type" value="mRNA"/>
</dbReference>
<dbReference type="EMBL" id="BC001379">
    <property type="protein sequence ID" value="AAH01379.1"/>
    <property type="molecule type" value="mRNA"/>
</dbReference>
<dbReference type="EMBL" id="BC014223">
    <property type="protein sequence ID" value="AAH14223.2"/>
    <property type="molecule type" value="mRNA"/>
</dbReference>
<dbReference type="CCDS" id="CCDS44968.1">
    <molecule id="Q14161-5"/>
</dbReference>
<dbReference type="CCDS" id="CCDS44969.1">
    <molecule id="Q14161-11"/>
</dbReference>
<dbReference type="CCDS" id="CCDS55884.1">
    <molecule id="Q14161-10"/>
</dbReference>
<dbReference type="CCDS" id="CCDS9138.1">
    <molecule id="Q14161-1"/>
</dbReference>
<dbReference type="CCDS" id="CCDS9139.1">
    <molecule id="Q14161-2"/>
</dbReference>
<dbReference type="RefSeq" id="NP_001128685.1">
    <molecule id="Q14161-10"/>
    <property type="nucleotide sequence ID" value="NM_001135213.3"/>
</dbReference>
<dbReference type="RefSeq" id="NP_001128686.1">
    <molecule id="Q14161-5"/>
    <property type="nucleotide sequence ID" value="NM_001135214.3"/>
</dbReference>
<dbReference type="RefSeq" id="NP_001317082.1">
    <property type="nucleotide sequence ID" value="NM_001330153.1"/>
</dbReference>
<dbReference type="RefSeq" id="NP_055591.2">
    <property type="nucleotide sequence ID" value="NM_014776.4"/>
</dbReference>
<dbReference type="RefSeq" id="NP_476510.1">
    <molecule id="Q14161-1"/>
    <property type="nucleotide sequence ID" value="NM_057169.5"/>
</dbReference>
<dbReference type="RefSeq" id="NP_476511.1">
    <molecule id="Q14161-11"/>
    <property type="nucleotide sequence ID" value="NM_057170.5"/>
</dbReference>
<dbReference type="RefSeq" id="NP_631940.2">
    <molecule id="Q14161-2"/>
    <property type="nucleotide sequence ID" value="NM_139201.3"/>
</dbReference>
<dbReference type="RefSeq" id="XP_006719770.1">
    <molecule id="Q14161-3"/>
    <property type="nucleotide sequence ID" value="XM_006719707.5"/>
</dbReference>
<dbReference type="RefSeq" id="XP_006719772.1">
    <molecule id="Q14161-4"/>
    <property type="nucleotide sequence ID" value="XM_006719709.5"/>
</dbReference>
<dbReference type="RefSeq" id="XP_054229884.1">
    <molecule id="Q14161-3"/>
    <property type="nucleotide sequence ID" value="XM_054373909.1"/>
</dbReference>
<dbReference type="RefSeq" id="XP_054229889.1">
    <molecule id="Q14161-4"/>
    <property type="nucleotide sequence ID" value="XM_054373914.1"/>
</dbReference>
<dbReference type="SMR" id="Q14161"/>
<dbReference type="BioGRID" id="115154">
    <property type="interactions" value="141"/>
</dbReference>
<dbReference type="CORUM" id="Q14161"/>
<dbReference type="FunCoup" id="Q14161">
    <property type="interactions" value="2209"/>
</dbReference>
<dbReference type="IntAct" id="Q14161">
    <property type="interactions" value="79"/>
</dbReference>
<dbReference type="MINT" id="Q14161"/>
<dbReference type="STRING" id="9606.ENSP00000347464"/>
<dbReference type="GlyCosmos" id="Q14161">
    <property type="glycosylation" value="7 sites, 2 glycans"/>
</dbReference>
<dbReference type="GlyGen" id="Q14161">
    <property type="glycosylation" value="10 sites, 1 N-linked glycan (1 site), 2 O-linked glycans (9 sites)"/>
</dbReference>
<dbReference type="iPTMnet" id="Q14161"/>
<dbReference type="PhosphoSitePlus" id="Q14161"/>
<dbReference type="BioMuta" id="GIT2"/>
<dbReference type="DMDM" id="17376322"/>
<dbReference type="jPOST" id="Q14161"/>
<dbReference type="MassIVE" id="Q14161"/>
<dbReference type="PaxDb" id="9606-ENSP00000347464"/>
<dbReference type="PeptideAtlas" id="Q14161"/>
<dbReference type="ProteomicsDB" id="59876">
    <molecule id="Q14161-1"/>
</dbReference>
<dbReference type="ProteomicsDB" id="59877">
    <molecule id="Q14161-10"/>
</dbReference>
<dbReference type="ProteomicsDB" id="59878">
    <molecule id="Q14161-11"/>
</dbReference>
<dbReference type="ProteomicsDB" id="59879">
    <molecule id="Q14161-2"/>
</dbReference>
<dbReference type="ProteomicsDB" id="59880">
    <molecule id="Q14161-3"/>
</dbReference>
<dbReference type="ProteomicsDB" id="59881">
    <molecule id="Q14161-4"/>
</dbReference>
<dbReference type="ProteomicsDB" id="59882">
    <molecule id="Q14161-5"/>
</dbReference>
<dbReference type="ProteomicsDB" id="59883">
    <molecule id="Q14161-6"/>
</dbReference>
<dbReference type="ProteomicsDB" id="59884">
    <molecule id="Q14161-7"/>
</dbReference>
<dbReference type="ProteomicsDB" id="59885">
    <molecule id="Q14161-8"/>
</dbReference>
<dbReference type="ProteomicsDB" id="59886">
    <molecule id="Q14161-9"/>
</dbReference>
<dbReference type="Pumba" id="Q14161"/>
<dbReference type="ABCD" id="Q14161">
    <property type="antibodies" value="1 sequenced antibody"/>
</dbReference>
<dbReference type="Antibodypedia" id="30932">
    <property type="antibodies" value="325 antibodies from 37 providers"/>
</dbReference>
<dbReference type="CPTC" id="Q14161">
    <property type="antibodies" value="1 antibody"/>
</dbReference>
<dbReference type="DNASU" id="9815"/>
<dbReference type="Ensembl" id="ENST00000355312.8">
    <molecule id="Q14161-1"/>
    <property type="protein sequence ID" value="ENSP00000347464.3"/>
    <property type="gene ID" value="ENSG00000139436.22"/>
</dbReference>
<dbReference type="Ensembl" id="ENST00000361006.9">
    <molecule id="Q14161-5"/>
    <property type="protein sequence ID" value="ENSP00000354282.5"/>
    <property type="gene ID" value="ENSG00000139436.22"/>
</dbReference>
<dbReference type="Ensembl" id="ENST00000457474.6">
    <molecule id="Q14161-10"/>
    <property type="protein sequence ID" value="ENSP00000391813.2"/>
    <property type="gene ID" value="ENSG00000139436.22"/>
</dbReference>
<dbReference type="Ensembl" id="ENST00000547815.5">
    <molecule id="Q14161-2"/>
    <property type="protein sequence ID" value="ENSP00000450348.1"/>
    <property type="gene ID" value="ENSG00000139436.22"/>
</dbReference>
<dbReference type="Ensembl" id="ENST00000553118.5">
    <molecule id="Q14161-11"/>
    <property type="protein sequence ID" value="ENSP00000447465.1"/>
    <property type="gene ID" value="ENSG00000139436.22"/>
</dbReference>
<dbReference type="GeneID" id="9815"/>
<dbReference type="KEGG" id="hsa:9815"/>
<dbReference type="MANE-Select" id="ENST00000355312.8">
    <property type="protein sequence ID" value="ENSP00000347464.3"/>
    <property type="RefSeq nucleotide sequence ID" value="NM_057169.5"/>
    <property type="RefSeq protein sequence ID" value="NP_476510.1"/>
</dbReference>
<dbReference type="UCSC" id="uc001tpq.3">
    <molecule id="Q14161-1"/>
    <property type="organism name" value="human"/>
</dbReference>
<dbReference type="AGR" id="HGNC:4273"/>
<dbReference type="CTD" id="9815"/>
<dbReference type="DisGeNET" id="9815"/>
<dbReference type="GeneCards" id="GIT2"/>
<dbReference type="HGNC" id="HGNC:4273">
    <property type="gene designation" value="GIT2"/>
</dbReference>
<dbReference type="HPA" id="ENSG00000139436">
    <property type="expression patterns" value="Low tissue specificity"/>
</dbReference>
<dbReference type="MIM" id="608564">
    <property type="type" value="gene"/>
</dbReference>
<dbReference type="neXtProt" id="NX_Q14161"/>
<dbReference type="OpenTargets" id="ENSG00000139436"/>
<dbReference type="PharmGKB" id="PA28684"/>
<dbReference type="VEuPathDB" id="HostDB:ENSG00000139436"/>
<dbReference type="eggNOG" id="KOG0818">
    <property type="taxonomic scope" value="Eukaryota"/>
</dbReference>
<dbReference type="GeneTree" id="ENSGT00940000156383"/>
<dbReference type="HOGENOM" id="CLU_009739_0_0_1"/>
<dbReference type="InParanoid" id="Q14161"/>
<dbReference type="OMA" id="DPNYYHE"/>
<dbReference type="OrthoDB" id="5588096at2759"/>
<dbReference type="PAN-GO" id="Q14161">
    <property type="GO annotations" value="7 GO annotations based on evolutionary models"/>
</dbReference>
<dbReference type="PhylomeDB" id="Q14161"/>
<dbReference type="TreeFam" id="TF317762"/>
<dbReference type="PathwayCommons" id="Q14161"/>
<dbReference type="Reactome" id="R-HSA-9013148">
    <property type="pathway name" value="CDC42 GTPase cycle"/>
</dbReference>
<dbReference type="Reactome" id="R-HSA-9013149">
    <property type="pathway name" value="RAC1 GTPase cycle"/>
</dbReference>
<dbReference type="Reactome" id="R-HSA-9013404">
    <property type="pathway name" value="RAC2 GTPase cycle"/>
</dbReference>
<dbReference type="Reactome" id="R-HSA-9013406">
    <property type="pathway name" value="RHOQ GTPase cycle"/>
</dbReference>
<dbReference type="Reactome" id="R-HSA-9013409">
    <property type="pathway name" value="RHOJ GTPase cycle"/>
</dbReference>
<dbReference type="Reactome" id="R-HSA-9013420">
    <property type="pathway name" value="RHOU GTPase cycle"/>
</dbReference>
<dbReference type="Reactome" id="R-HSA-9013423">
    <property type="pathway name" value="RAC3 GTPase cycle"/>
</dbReference>
<dbReference type="Reactome" id="R-HSA-9013424">
    <property type="pathway name" value="RHOV GTPase cycle"/>
</dbReference>
<dbReference type="SignaLink" id="Q14161"/>
<dbReference type="SIGNOR" id="Q14161"/>
<dbReference type="BioGRID-ORCS" id="9815">
    <property type="hits" value="17 hits in 1163 CRISPR screens"/>
</dbReference>
<dbReference type="ChiTaRS" id="GIT2">
    <property type="organism name" value="human"/>
</dbReference>
<dbReference type="GeneWiki" id="GIT2"/>
<dbReference type="GenomeRNAi" id="9815"/>
<dbReference type="Pharos" id="Q14161">
    <property type="development level" value="Tbio"/>
</dbReference>
<dbReference type="PRO" id="PR:Q14161"/>
<dbReference type="Proteomes" id="UP000005640">
    <property type="component" value="Chromosome 12"/>
</dbReference>
<dbReference type="RNAct" id="Q14161">
    <property type="molecule type" value="protein"/>
</dbReference>
<dbReference type="Bgee" id="ENSG00000139436">
    <property type="expression patterns" value="Expressed in monocyte and 181 other cell types or tissues"/>
</dbReference>
<dbReference type="ExpressionAtlas" id="Q14161">
    <property type="expression patterns" value="baseline and differential"/>
</dbReference>
<dbReference type="GO" id="GO:0005925">
    <property type="term" value="C:focal adhesion"/>
    <property type="evidence" value="ECO:0007005"/>
    <property type="project" value="UniProtKB"/>
</dbReference>
<dbReference type="GO" id="GO:0005654">
    <property type="term" value="C:nucleoplasm"/>
    <property type="evidence" value="ECO:0000314"/>
    <property type="project" value="UniProtKB"/>
</dbReference>
<dbReference type="GO" id="GO:0098793">
    <property type="term" value="C:presynapse"/>
    <property type="evidence" value="ECO:0007669"/>
    <property type="project" value="GOC"/>
</dbReference>
<dbReference type="GO" id="GO:0045202">
    <property type="term" value="C:synapse"/>
    <property type="evidence" value="ECO:0000318"/>
    <property type="project" value="GO_Central"/>
</dbReference>
<dbReference type="GO" id="GO:0005096">
    <property type="term" value="F:GTPase activator activity"/>
    <property type="evidence" value="ECO:0000318"/>
    <property type="project" value="GO_Central"/>
</dbReference>
<dbReference type="GO" id="GO:0031267">
    <property type="term" value="F:small GTPase binding"/>
    <property type="evidence" value="ECO:0000318"/>
    <property type="project" value="GO_Central"/>
</dbReference>
<dbReference type="GO" id="GO:0008270">
    <property type="term" value="F:zinc ion binding"/>
    <property type="evidence" value="ECO:0007669"/>
    <property type="project" value="UniProtKB-KW"/>
</dbReference>
<dbReference type="GO" id="GO:0007420">
    <property type="term" value="P:brain development"/>
    <property type="evidence" value="ECO:0000318"/>
    <property type="project" value="GO_Central"/>
</dbReference>
<dbReference type="GO" id="GO:0032012">
    <property type="term" value="P:regulation of ARF protein signal transduction"/>
    <property type="evidence" value="ECO:0000318"/>
    <property type="project" value="GO_Central"/>
</dbReference>
<dbReference type="GO" id="GO:0008277">
    <property type="term" value="P:regulation of G protein-coupled receptor signaling pathway"/>
    <property type="evidence" value="ECO:0000318"/>
    <property type="project" value="GO_Central"/>
</dbReference>
<dbReference type="GO" id="GO:0036465">
    <property type="term" value="P:synaptic vesicle recycling"/>
    <property type="evidence" value="ECO:0000318"/>
    <property type="project" value="GO_Central"/>
</dbReference>
<dbReference type="CDD" id="cd08847">
    <property type="entry name" value="ArfGap_GIT2"/>
    <property type="match status" value="1"/>
</dbReference>
<dbReference type="FunFam" id="1.25.40.20:FF:000013">
    <property type="entry name" value="ARF GTPase-activating protein GIT1 isoform 1"/>
    <property type="match status" value="1"/>
</dbReference>
<dbReference type="FunFam" id="1.10.220.150:FF:000003">
    <property type="entry name" value="ARF GTPase-activating protein GIT2 isoform 1"/>
    <property type="match status" value="1"/>
</dbReference>
<dbReference type="FunFam" id="1.20.120.330:FF:000002">
    <property type="entry name" value="ARF GTPase-activating protein GIT2 isoform 1"/>
    <property type="match status" value="1"/>
</dbReference>
<dbReference type="FunFam" id="1.20.5.170:FF:000015">
    <property type="entry name" value="ARF GTPase-activating protein GIT2 isoform 1"/>
    <property type="match status" value="1"/>
</dbReference>
<dbReference type="Gene3D" id="1.20.5.170">
    <property type="match status" value="1"/>
</dbReference>
<dbReference type="Gene3D" id="1.25.40.20">
    <property type="entry name" value="Ankyrin repeat-containing domain"/>
    <property type="match status" value="1"/>
</dbReference>
<dbReference type="Gene3D" id="1.10.220.150">
    <property type="entry name" value="Arf GTPase activating protein"/>
    <property type="match status" value="1"/>
</dbReference>
<dbReference type="Gene3D" id="1.20.120.330">
    <property type="entry name" value="Nucleotidyltransferases domain 2"/>
    <property type="match status" value="1"/>
</dbReference>
<dbReference type="InterPro" id="IPR002110">
    <property type="entry name" value="Ankyrin_rpt"/>
</dbReference>
<dbReference type="InterPro" id="IPR036770">
    <property type="entry name" value="Ankyrin_rpt-contain_sf"/>
</dbReference>
<dbReference type="InterPro" id="IPR037278">
    <property type="entry name" value="ARFGAP/RecO"/>
</dbReference>
<dbReference type="InterPro" id="IPR001164">
    <property type="entry name" value="ArfGAP_dom"/>
</dbReference>
<dbReference type="InterPro" id="IPR038508">
    <property type="entry name" value="ArfGAP_dom_sf"/>
</dbReference>
<dbReference type="InterPro" id="IPR047161">
    <property type="entry name" value="GIT-like"/>
</dbReference>
<dbReference type="InterPro" id="IPR032352">
    <property type="entry name" value="GIT1/2_CC"/>
</dbReference>
<dbReference type="InterPro" id="IPR022018">
    <property type="entry name" value="GIT1_C"/>
</dbReference>
<dbReference type="InterPro" id="IPR013724">
    <property type="entry name" value="GIT_SHD"/>
</dbReference>
<dbReference type="PANTHER" id="PTHR46097:SF4">
    <property type="entry name" value="ARF GTPASE-ACTIVATING PROTEIN GIT2"/>
    <property type="match status" value="1"/>
</dbReference>
<dbReference type="PANTHER" id="PTHR46097">
    <property type="entry name" value="G PROTEIN-COUPLED RECEPTOR KINASE INTERACTING ARFGAP"/>
    <property type="match status" value="1"/>
</dbReference>
<dbReference type="Pfam" id="PF12796">
    <property type="entry name" value="Ank_2"/>
    <property type="match status" value="1"/>
</dbReference>
<dbReference type="Pfam" id="PF01412">
    <property type="entry name" value="ArfGap"/>
    <property type="match status" value="1"/>
</dbReference>
<dbReference type="Pfam" id="PF12205">
    <property type="entry name" value="GIT1_C"/>
    <property type="match status" value="1"/>
</dbReference>
<dbReference type="Pfam" id="PF16559">
    <property type="entry name" value="GIT_CC"/>
    <property type="match status" value="1"/>
</dbReference>
<dbReference type="Pfam" id="PF08518">
    <property type="entry name" value="GIT_SHD"/>
    <property type="match status" value="2"/>
</dbReference>
<dbReference type="PRINTS" id="PR00405">
    <property type="entry name" value="REVINTRACTNG"/>
</dbReference>
<dbReference type="SMART" id="SM00248">
    <property type="entry name" value="ANK"/>
    <property type="match status" value="3"/>
</dbReference>
<dbReference type="SMART" id="SM00105">
    <property type="entry name" value="ArfGap"/>
    <property type="match status" value="1"/>
</dbReference>
<dbReference type="SMART" id="SM00555">
    <property type="entry name" value="GIT"/>
    <property type="match status" value="2"/>
</dbReference>
<dbReference type="SUPFAM" id="SSF48403">
    <property type="entry name" value="Ankyrin repeat"/>
    <property type="match status" value="1"/>
</dbReference>
<dbReference type="SUPFAM" id="SSF57863">
    <property type="entry name" value="ArfGap/RecO-like zinc finger"/>
    <property type="match status" value="1"/>
</dbReference>
<dbReference type="PROSITE" id="PS50297">
    <property type="entry name" value="ANK_REP_REGION"/>
    <property type="match status" value="1"/>
</dbReference>
<dbReference type="PROSITE" id="PS50088">
    <property type="entry name" value="ANK_REPEAT"/>
    <property type="match status" value="1"/>
</dbReference>
<dbReference type="PROSITE" id="PS50115">
    <property type="entry name" value="ARFGAP"/>
    <property type="match status" value="1"/>
</dbReference>
<evidence type="ECO:0000250" key="1">
    <source>
        <dbReference type="UniProtKB" id="Q66H91"/>
    </source>
</evidence>
<evidence type="ECO:0000250" key="2">
    <source>
        <dbReference type="UniProtKB" id="Q9JLQ2"/>
    </source>
</evidence>
<evidence type="ECO:0000255" key="3"/>
<evidence type="ECO:0000255" key="4">
    <source>
        <dbReference type="PROSITE-ProRule" id="PRU00288"/>
    </source>
</evidence>
<evidence type="ECO:0000256" key="5">
    <source>
        <dbReference type="SAM" id="MobiDB-lite"/>
    </source>
</evidence>
<evidence type="ECO:0000269" key="6">
    <source>
    </source>
</evidence>
<evidence type="ECO:0000269" key="7">
    <source>
    </source>
</evidence>
<evidence type="ECO:0000269" key="8">
    <source>
    </source>
</evidence>
<evidence type="ECO:0000303" key="9">
    <source>
    </source>
</evidence>
<evidence type="ECO:0000303" key="10">
    <source>
    </source>
</evidence>
<evidence type="ECO:0000303" key="11">
    <source>
    </source>
</evidence>
<evidence type="ECO:0000303" key="12">
    <source ref="4"/>
</evidence>
<evidence type="ECO:0000305" key="13"/>
<evidence type="ECO:0007744" key="14">
    <source>
    </source>
</evidence>
<evidence type="ECO:0007744" key="15">
    <source>
    </source>
</evidence>
<evidence type="ECO:0007744" key="16">
    <source>
    </source>
</evidence>
<evidence type="ECO:0007744" key="17">
    <source>
    </source>
</evidence>
<evidence type="ECO:0007744" key="18">
    <source>
    </source>
</evidence>
<evidence type="ECO:0007744" key="19">
    <source>
    </source>
</evidence>
<evidence type="ECO:0007744" key="20">
    <source>
    </source>
</evidence>
<evidence type="ECO:0007744" key="21">
    <source>
    </source>
</evidence>
<protein>
    <recommendedName>
        <fullName>ARF GTPase-activating protein GIT2</fullName>
        <shortName>ARF GAP GIT2</shortName>
    </recommendedName>
    <alternativeName>
        <fullName>Cool-interacting tyrosine-phosphorylated protein 2</fullName>
        <shortName>CAT-2</shortName>
        <shortName>CAT2</shortName>
    </alternativeName>
    <alternativeName>
        <fullName>G protein-coupled receptor kinase-interactor 2</fullName>
    </alternativeName>
    <alternativeName>
        <fullName>GRK-interacting protein 2</fullName>
    </alternativeName>
</protein>
<keyword id="KW-0025">Alternative splicing</keyword>
<keyword id="KW-0040">ANK repeat</keyword>
<keyword id="KW-0175">Coiled coil</keyword>
<keyword id="KW-0343">GTPase activation</keyword>
<keyword id="KW-0479">Metal-binding</keyword>
<keyword id="KW-0597">Phosphoprotein</keyword>
<keyword id="KW-1267">Proteomics identification</keyword>
<keyword id="KW-1185">Reference proteome</keyword>
<keyword id="KW-0677">Repeat</keyword>
<keyword id="KW-0862">Zinc</keyword>
<keyword id="KW-0863">Zinc-finger</keyword>
<gene>
    <name type="primary">GIT2</name>
    <name type="synonym">KIAA0148</name>
</gene>